<sequence>MSVKWTSVILLIQLSFYFSSGSCGKVLVWAAEYSHWMNMKTILEELVQRGHEVTVLASSASILFDPNNSSALKIEVFPTSLTKTEFENISMQEVKRWIELPKDTFWLYFSQMQEIMWRFGDIIRNFCKDVVSNKKLMKKLQESRFDVVFADPIFPCSELLAELFNIPLVYSLRFTPGYIFEKHCGGFLFPPSYVPVVMSELSDQMTFMERVKNMIYMLSFDFYFQMYDMKKWDQFYSEVLGRPTTLSETMGKADIWLIRNSWNFQFPHPLLPNVDFVGGLHCKPAKPLPKEMEEFVQSSGENGVVVFSLGSMVTNMEEERANVIASALAQIPQKVLWRFDGKKPDTLGLNTRLYKWIPQNDLLGHPKTRAFITHGGANGIYEAIYHGVPMVGIPLFADQPDNIAHMKTKGAAVRLDFDTMSSTDLANRLKTVINDPLYKENVMKLSRIQHDQPVKPLDRAVFWIEFVMRHKGAKHLRPAAHDLTWFQYHSLDVIGFLLACVATVIFVIMKCCLFCFWKFARKGKKGKSD</sequence>
<organism>
    <name type="scientific">Macaca fascicularis</name>
    <name type="common">Crab-eating macaque</name>
    <name type="synonym">Cynomolgus monkey</name>
    <dbReference type="NCBI Taxonomy" id="9541"/>
    <lineage>
        <taxon>Eukaryota</taxon>
        <taxon>Metazoa</taxon>
        <taxon>Chordata</taxon>
        <taxon>Craniata</taxon>
        <taxon>Vertebrata</taxon>
        <taxon>Euteleostomi</taxon>
        <taxon>Mammalia</taxon>
        <taxon>Eutheria</taxon>
        <taxon>Euarchontoglires</taxon>
        <taxon>Primates</taxon>
        <taxon>Haplorrhini</taxon>
        <taxon>Catarrhini</taxon>
        <taxon>Cercopithecidae</taxon>
        <taxon>Cercopithecinae</taxon>
        <taxon>Macaca</taxon>
    </lineage>
</organism>
<evidence type="ECO:0000255" key="1"/>
<evidence type="ECO:0000305" key="2"/>
<name>UD2B9_MACFA</name>
<protein>
    <recommendedName>
        <fullName>UDP-glucuronosyltransferase 2B9</fullName>
        <shortName>UDPGT 2B9</shortName>
        <ecNumber>2.4.1.17</ecNumber>
    </recommendedName>
</protein>
<reference key="1">
    <citation type="journal article" date="1997" name="DNA Cell Biol.">
        <title>Expression and characterization of a novel UDP-glucuronosyltransferase, UGT2B9, from cynomolgus monkey.</title>
        <authorList>
            <person name="Belanger G."/>
            <person name="Beaulieu M."/>
            <person name="Levesque E."/>
            <person name="Hum D.W."/>
            <person name="Belanger A."/>
        </authorList>
    </citation>
    <scope>NUCLEOTIDE SEQUENCE [MRNA]</scope>
    <source>
        <tissue>Prostate</tissue>
    </source>
</reference>
<comment type="function">
    <text>UDPGT is of major importance in the conjugation and subsequent elimination of potentially toxic xenobiotics and endogenous compounds. This isozyme is active on C18, C19, and C21 steroids, bile acids, and several xenobiotics including eugenol, 1-naphthol, and p-nitrophenol.</text>
</comment>
<comment type="catalytic activity">
    <reaction>
        <text>glucuronate acceptor + UDP-alpha-D-glucuronate = acceptor beta-D-glucuronoside + UDP + H(+)</text>
        <dbReference type="Rhea" id="RHEA:21032"/>
        <dbReference type="ChEBI" id="CHEBI:15378"/>
        <dbReference type="ChEBI" id="CHEBI:58052"/>
        <dbReference type="ChEBI" id="CHEBI:58223"/>
        <dbReference type="ChEBI" id="CHEBI:132367"/>
        <dbReference type="ChEBI" id="CHEBI:132368"/>
        <dbReference type="EC" id="2.4.1.17"/>
    </reaction>
</comment>
<comment type="subcellular location">
    <subcellularLocation>
        <location evidence="2">Microsome membrane</location>
        <topology evidence="2">Single-pass membrane protein</topology>
    </subcellularLocation>
    <subcellularLocation>
        <location evidence="2">Endoplasmic reticulum membrane</location>
        <topology evidence="2">Single-pass membrane protein</topology>
    </subcellularLocation>
</comment>
<comment type="similarity">
    <text evidence="2">Belongs to the UDP-glycosyltransferase family.</text>
</comment>
<keyword id="KW-0088">Bile acid catabolism</keyword>
<keyword id="KW-0256">Endoplasmic reticulum</keyword>
<keyword id="KW-0325">Glycoprotein</keyword>
<keyword id="KW-0328">Glycosyltransferase</keyword>
<keyword id="KW-0442">Lipid degradation</keyword>
<keyword id="KW-0443">Lipid metabolism</keyword>
<keyword id="KW-0472">Membrane</keyword>
<keyword id="KW-0492">Microsome</keyword>
<keyword id="KW-1185">Reference proteome</keyword>
<keyword id="KW-0732">Signal</keyword>
<keyword id="KW-0753">Steroid metabolism</keyword>
<keyword id="KW-0808">Transferase</keyword>
<keyword id="KW-0812">Transmembrane</keyword>
<keyword id="KW-1133">Transmembrane helix</keyword>
<feature type="signal peptide" evidence="1">
    <location>
        <begin position="1"/>
        <end position="21"/>
    </location>
</feature>
<feature type="chain" id="PRO_0000036033" description="UDP-glucuronosyltransferase 2B9">
    <location>
        <begin position="22"/>
        <end position="529"/>
    </location>
</feature>
<feature type="transmembrane region" description="Helical" evidence="1">
    <location>
        <begin position="494"/>
        <end position="514"/>
    </location>
</feature>
<feature type="glycosylation site" description="N-linked (GlcNAc...) asparagine" evidence="1">
    <location>
        <position position="67"/>
    </location>
</feature>
<feature type="glycosylation site" description="N-linked (GlcNAc...) asparagine" evidence="1">
    <location>
        <position position="68"/>
    </location>
</feature>
<feature type="glycosylation site" description="N-linked (GlcNAc...) asparagine" evidence="1">
    <location>
        <position position="88"/>
    </location>
</feature>
<accession>O02663</accession>
<gene>
    <name type="primary">UGT2B9</name>
</gene>
<proteinExistence type="evidence at transcript level"/>
<dbReference type="EC" id="2.4.1.17"/>
<dbReference type="EMBL" id="U91582">
    <property type="protein sequence ID" value="AAB50249.1"/>
    <property type="molecule type" value="mRNA"/>
</dbReference>
<dbReference type="RefSeq" id="NP_001270204.1">
    <property type="nucleotide sequence ID" value="NM_001283275.1"/>
</dbReference>
<dbReference type="SMR" id="O02663"/>
<dbReference type="ChEMBL" id="CHEMBL3763003"/>
<dbReference type="CAZy" id="GT1">
    <property type="family name" value="Glycosyltransferase Family 1"/>
</dbReference>
<dbReference type="GlyCosmos" id="O02663">
    <property type="glycosylation" value="3 sites, No reported glycans"/>
</dbReference>
<dbReference type="eggNOG" id="KOG1192">
    <property type="taxonomic scope" value="Eukaryota"/>
</dbReference>
<dbReference type="Proteomes" id="UP000233100">
    <property type="component" value="Unplaced"/>
</dbReference>
<dbReference type="GO" id="GO:0005789">
    <property type="term" value="C:endoplasmic reticulum membrane"/>
    <property type="evidence" value="ECO:0007669"/>
    <property type="project" value="UniProtKB-SubCell"/>
</dbReference>
<dbReference type="GO" id="GO:0015020">
    <property type="term" value="F:glucuronosyltransferase activity"/>
    <property type="evidence" value="ECO:0007669"/>
    <property type="project" value="UniProtKB-EC"/>
</dbReference>
<dbReference type="GO" id="GO:0030573">
    <property type="term" value="P:bile acid catabolic process"/>
    <property type="evidence" value="ECO:0007669"/>
    <property type="project" value="UniProtKB-KW"/>
</dbReference>
<dbReference type="GO" id="GO:0016042">
    <property type="term" value="P:lipid catabolic process"/>
    <property type="evidence" value="ECO:0007669"/>
    <property type="project" value="UniProtKB-KW"/>
</dbReference>
<dbReference type="CDD" id="cd03784">
    <property type="entry name" value="GT1_Gtf-like"/>
    <property type="match status" value="1"/>
</dbReference>
<dbReference type="FunFam" id="3.40.50.2000:FF:000001">
    <property type="entry name" value="UDP-glucuronosyltransferase"/>
    <property type="match status" value="1"/>
</dbReference>
<dbReference type="FunFam" id="3.40.50.2000:FF:000081">
    <property type="entry name" value="UDP-glucuronosyltransferase 2A2"/>
    <property type="match status" value="1"/>
</dbReference>
<dbReference type="Gene3D" id="3.40.50.2000">
    <property type="entry name" value="Glycogen Phosphorylase B"/>
    <property type="match status" value="2"/>
</dbReference>
<dbReference type="InterPro" id="IPR050271">
    <property type="entry name" value="UDP-glycosyltransferase"/>
</dbReference>
<dbReference type="InterPro" id="IPR002213">
    <property type="entry name" value="UDP_glucos_trans"/>
</dbReference>
<dbReference type="InterPro" id="IPR035595">
    <property type="entry name" value="UDP_glycos_trans_CS"/>
</dbReference>
<dbReference type="PANTHER" id="PTHR48043">
    <property type="entry name" value="EG:EG0003.4 PROTEIN-RELATED"/>
    <property type="match status" value="1"/>
</dbReference>
<dbReference type="PANTHER" id="PTHR48043:SF160">
    <property type="entry name" value="UDP-GLUCURONOSYLTRANSFERASE 2B33"/>
    <property type="match status" value="1"/>
</dbReference>
<dbReference type="Pfam" id="PF00201">
    <property type="entry name" value="UDPGT"/>
    <property type="match status" value="1"/>
</dbReference>
<dbReference type="SUPFAM" id="SSF53756">
    <property type="entry name" value="UDP-Glycosyltransferase/glycogen phosphorylase"/>
    <property type="match status" value="1"/>
</dbReference>
<dbReference type="PROSITE" id="PS00375">
    <property type="entry name" value="UDPGT"/>
    <property type="match status" value="1"/>
</dbReference>